<evidence type="ECO:0000255" key="1">
    <source>
        <dbReference type="HAMAP-Rule" id="MF_00075"/>
    </source>
</evidence>
<sequence length="72" mass="8306">MSKDDVIEVEGTVVENLPNAMFRVELPNGHRVLAHVSGKIRMHFIRILPGDRVTVELSPYDLTRGRIVYRYK</sequence>
<keyword id="KW-0963">Cytoplasm</keyword>
<keyword id="KW-0396">Initiation factor</keyword>
<keyword id="KW-0648">Protein biosynthesis</keyword>
<keyword id="KW-1185">Reference proteome</keyword>
<keyword id="KW-0694">RNA-binding</keyword>
<keyword id="KW-0699">rRNA-binding</keyword>
<organism>
    <name type="scientific">Symbiobacterium thermophilum (strain DSM 24528 / JCM 14929 / IAM 14863 / T)</name>
    <dbReference type="NCBI Taxonomy" id="292459"/>
    <lineage>
        <taxon>Bacteria</taxon>
        <taxon>Bacillati</taxon>
        <taxon>Bacillota</taxon>
        <taxon>Clostridia</taxon>
        <taxon>Eubacteriales</taxon>
        <taxon>Symbiobacteriaceae</taxon>
        <taxon>Symbiobacterium</taxon>
    </lineage>
</organism>
<proteinExistence type="inferred from homology"/>
<accession>Q67JW6</accession>
<name>IF12_SYMTH</name>
<dbReference type="EMBL" id="AP006840">
    <property type="protein sequence ID" value="BAD42034.1"/>
    <property type="molecule type" value="Genomic_DNA"/>
</dbReference>
<dbReference type="RefSeq" id="WP_011197167.1">
    <property type="nucleotide sequence ID" value="NC_006177.1"/>
</dbReference>
<dbReference type="SMR" id="Q67JW6"/>
<dbReference type="STRING" id="292459.STH3052"/>
<dbReference type="KEGG" id="sth:STH3052"/>
<dbReference type="eggNOG" id="COG0361">
    <property type="taxonomic scope" value="Bacteria"/>
</dbReference>
<dbReference type="HOGENOM" id="CLU_151267_1_0_9"/>
<dbReference type="OrthoDB" id="9803250at2"/>
<dbReference type="Proteomes" id="UP000000417">
    <property type="component" value="Chromosome"/>
</dbReference>
<dbReference type="GO" id="GO:0005829">
    <property type="term" value="C:cytosol"/>
    <property type="evidence" value="ECO:0007669"/>
    <property type="project" value="TreeGrafter"/>
</dbReference>
<dbReference type="GO" id="GO:0043022">
    <property type="term" value="F:ribosome binding"/>
    <property type="evidence" value="ECO:0007669"/>
    <property type="project" value="UniProtKB-UniRule"/>
</dbReference>
<dbReference type="GO" id="GO:0019843">
    <property type="term" value="F:rRNA binding"/>
    <property type="evidence" value="ECO:0007669"/>
    <property type="project" value="UniProtKB-UniRule"/>
</dbReference>
<dbReference type="GO" id="GO:0003743">
    <property type="term" value="F:translation initiation factor activity"/>
    <property type="evidence" value="ECO:0007669"/>
    <property type="project" value="UniProtKB-UniRule"/>
</dbReference>
<dbReference type="CDD" id="cd04451">
    <property type="entry name" value="S1_IF1"/>
    <property type="match status" value="1"/>
</dbReference>
<dbReference type="FunFam" id="2.40.50.140:FF:000002">
    <property type="entry name" value="Translation initiation factor IF-1"/>
    <property type="match status" value="1"/>
</dbReference>
<dbReference type="Gene3D" id="2.40.50.140">
    <property type="entry name" value="Nucleic acid-binding proteins"/>
    <property type="match status" value="1"/>
</dbReference>
<dbReference type="HAMAP" id="MF_00075">
    <property type="entry name" value="IF_1"/>
    <property type="match status" value="1"/>
</dbReference>
<dbReference type="InterPro" id="IPR012340">
    <property type="entry name" value="NA-bd_OB-fold"/>
</dbReference>
<dbReference type="InterPro" id="IPR006196">
    <property type="entry name" value="RNA-binding_domain_S1_IF1"/>
</dbReference>
<dbReference type="InterPro" id="IPR003029">
    <property type="entry name" value="S1_domain"/>
</dbReference>
<dbReference type="InterPro" id="IPR004368">
    <property type="entry name" value="TIF_IF1"/>
</dbReference>
<dbReference type="NCBIfam" id="TIGR00008">
    <property type="entry name" value="infA"/>
    <property type="match status" value="1"/>
</dbReference>
<dbReference type="PANTHER" id="PTHR33370">
    <property type="entry name" value="TRANSLATION INITIATION FACTOR IF-1, CHLOROPLASTIC"/>
    <property type="match status" value="1"/>
</dbReference>
<dbReference type="PANTHER" id="PTHR33370:SF1">
    <property type="entry name" value="TRANSLATION INITIATION FACTOR IF-1, CHLOROPLASTIC"/>
    <property type="match status" value="1"/>
</dbReference>
<dbReference type="Pfam" id="PF01176">
    <property type="entry name" value="eIF-1a"/>
    <property type="match status" value="1"/>
</dbReference>
<dbReference type="SMART" id="SM00316">
    <property type="entry name" value="S1"/>
    <property type="match status" value="1"/>
</dbReference>
<dbReference type="SUPFAM" id="SSF50249">
    <property type="entry name" value="Nucleic acid-binding proteins"/>
    <property type="match status" value="1"/>
</dbReference>
<dbReference type="PROSITE" id="PS50832">
    <property type="entry name" value="S1_IF1_TYPE"/>
    <property type="match status" value="1"/>
</dbReference>
<comment type="function">
    <text evidence="1">One of the essential components for the initiation of protein synthesis. Stabilizes the binding of IF-2 and IF-3 on the 30S subunit to which N-formylmethionyl-tRNA(fMet) subsequently binds. Helps modulate mRNA selection, yielding the 30S pre-initiation complex (PIC). Upon addition of the 50S ribosomal subunit IF-1, IF-2 and IF-3 are released leaving the mature 70S translation initiation complex.</text>
</comment>
<comment type="subunit">
    <text evidence="1">Component of the 30S ribosomal translation pre-initiation complex which assembles on the 30S ribosome in the order IF-2 and IF-3, IF-1 and N-formylmethionyl-tRNA(fMet); mRNA recruitment can occur at any time during PIC assembly.</text>
</comment>
<comment type="subcellular location">
    <subcellularLocation>
        <location evidence="1">Cytoplasm</location>
    </subcellularLocation>
</comment>
<comment type="similarity">
    <text evidence="1">Belongs to the IF-1 family.</text>
</comment>
<protein>
    <recommendedName>
        <fullName evidence="1">Translation initiation factor IF-1 2</fullName>
    </recommendedName>
</protein>
<feature type="chain" id="PRO_0000095888" description="Translation initiation factor IF-1 2">
    <location>
        <begin position="1"/>
        <end position="72"/>
    </location>
</feature>
<feature type="domain" description="S1-like" evidence="1">
    <location>
        <begin position="1"/>
        <end position="72"/>
    </location>
</feature>
<gene>
    <name evidence="1" type="primary">infA2</name>
    <name type="ordered locus">STH3052</name>
</gene>
<reference key="1">
    <citation type="journal article" date="2004" name="Nucleic Acids Res.">
        <title>Genome sequence of Symbiobacterium thermophilum, an uncultivable bacterium that depends on microbial commensalism.</title>
        <authorList>
            <person name="Ueda K."/>
            <person name="Yamashita A."/>
            <person name="Ishikawa J."/>
            <person name="Shimada M."/>
            <person name="Watsuji T."/>
            <person name="Morimura K."/>
            <person name="Ikeda H."/>
            <person name="Hattori M."/>
            <person name="Beppu T."/>
        </authorList>
    </citation>
    <scope>NUCLEOTIDE SEQUENCE [LARGE SCALE GENOMIC DNA]</scope>
    <source>
        <strain>DSM 24528 / JCM 14929 / IAM 14863 / T</strain>
    </source>
</reference>